<evidence type="ECO:0000250" key="1">
    <source>
        <dbReference type="UniProtKB" id="Q91ZX6"/>
    </source>
</evidence>
<evidence type="ECO:0000256" key="2">
    <source>
        <dbReference type="SAM" id="MobiDB-lite"/>
    </source>
</evidence>
<evidence type="ECO:0000269" key="3">
    <source>
    </source>
</evidence>
<evidence type="ECO:0000269" key="4">
    <source>
    </source>
</evidence>
<evidence type="ECO:0000269" key="5">
    <source>
    </source>
</evidence>
<evidence type="ECO:0000269" key="6">
    <source>
    </source>
</evidence>
<evidence type="ECO:0000269" key="7">
    <source>
    </source>
</evidence>
<evidence type="ECO:0000269" key="8">
    <source>
    </source>
</evidence>
<evidence type="ECO:0000269" key="9">
    <source>
    </source>
</evidence>
<evidence type="ECO:0000269" key="10">
    <source>
    </source>
</evidence>
<evidence type="ECO:0000269" key="11">
    <source>
    </source>
</evidence>
<evidence type="ECO:0000269" key="12">
    <source ref="1"/>
</evidence>
<evidence type="ECO:0000303" key="13">
    <source>
    </source>
</evidence>
<evidence type="ECO:0000303" key="14">
    <source>
    </source>
</evidence>
<evidence type="ECO:0000303" key="15">
    <source ref="1"/>
</evidence>
<evidence type="ECO:0000305" key="16"/>
<evidence type="ECO:0000312" key="17">
    <source>
        <dbReference type="HGNC" id="HGNC:23116"/>
    </source>
</evidence>
<evidence type="ECO:0007744" key="18">
    <source>
    </source>
</evidence>
<evidence type="ECO:0007744" key="19">
    <source>
    </source>
</evidence>
<evidence type="ECO:0007829" key="20">
    <source>
        <dbReference type="PDB" id="1TH0"/>
    </source>
</evidence>
<evidence type="ECO:0007829" key="21">
    <source>
        <dbReference type="PDB" id="2IO3"/>
    </source>
</evidence>
<evidence type="ECO:0007829" key="22">
    <source>
        <dbReference type="PDB" id="3ZO5"/>
    </source>
</evidence>
<protein>
    <recommendedName>
        <fullName evidence="16">Sentrin-specific protease 2</fullName>
        <ecNumber evidence="10 11">3.4.22.-</ecNumber>
    </recommendedName>
    <alternativeName>
        <fullName evidence="1">Axam2</fullName>
    </alternativeName>
    <alternativeName>
        <fullName evidence="1">SMT3-specific isopeptidase 2</fullName>
        <shortName evidence="1">Smt3ip2</shortName>
    </alternativeName>
    <alternativeName>
        <fullName evidence="15">Sentrin/SUMO-specific protease SENP2</fullName>
    </alternativeName>
</protein>
<keyword id="KW-0002">3D-structure</keyword>
<keyword id="KW-0025">Alternative splicing</keyword>
<keyword id="KW-0963">Cytoplasm</keyword>
<keyword id="KW-0378">Hydrolase</keyword>
<keyword id="KW-0472">Membrane</keyword>
<keyword id="KW-0509">mRNA transport</keyword>
<keyword id="KW-0906">Nuclear pore complex</keyword>
<keyword id="KW-0539">Nucleus</keyword>
<keyword id="KW-0597">Phosphoprotein</keyword>
<keyword id="KW-0645">Protease</keyword>
<keyword id="KW-0653">Protein transport</keyword>
<keyword id="KW-1267">Proteomics identification</keyword>
<keyword id="KW-1185">Reference proteome</keyword>
<keyword id="KW-0788">Thiol protease</keyword>
<keyword id="KW-0811">Translocation</keyword>
<keyword id="KW-0813">Transport</keyword>
<keyword id="KW-0832">Ubl conjugation</keyword>
<keyword id="KW-0833">Ubl conjugation pathway</keyword>
<keyword id="KW-0879">Wnt signaling pathway</keyword>
<reference key="1">
    <citation type="submission" date="2000-09" db="EMBL/GenBank/DDBJ databases">
        <title>Cloning of SENP2, a novel member of sentrin-specific protease family.</title>
        <authorList>
            <person name="Gong L."/>
            <person name="Yeh E.T.H."/>
        </authorList>
    </citation>
    <scope>NUCLEOTIDE SEQUENCE [MRNA] (ISOFORM 1)</scope>
    <scope>VARIANT LYS-301</scope>
</reference>
<reference key="2">
    <citation type="journal article" date="2000" name="DNA Res.">
        <title>Prediction of the coding sequences of unidentified human genes. XVI. The complete sequences of 150 new cDNA clones from brain which code for large proteins in vitro.</title>
        <authorList>
            <person name="Nagase T."/>
            <person name="Kikuno R."/>
            <person name="Ishikawa K."/>
            <person name="Hirosawa M."/>
            <person name="Ohara O."/>
        </authorList>
    </citation>
    <scope>NUCLEOTIDE SEQUENCE [LARGE SCALE MRNA] (ISOFORM 1)</scope>
    <scope>VARIANT LYS-301</scope>
    <source>
        <tissue>Brain</tissue>
    </source>
</reference>
<reference key="3">
    <citation type="journal article" date="2002" name="DNA Res.">
        <title>Construction of expression-ready cDNA clones for KIAA genes: manual curation of 330 KIAA cDNA clones.</title>
        <authorList>
            <person name="Nakajima D."/>
            <person name="Okazaki N."/>
            <person name="Yamakawa H."/>
            <person name="Kikuno R."/>
            <person name="Ohara O."/>
            <person name="Nagase T."/>
        </authorList>
    </citation>
    <scope>SEQUENCE REVISION</scope>
</reference>
<reference key="4">
    <citation type="journal article" date="2004" name="Nat. Genet.">
        <title>Complete sequencing and characterization of 21,243 full-length human cDNAs.</title>
        <authorList>
            <person name="Ota T."/>
            <person name="Suzuki Y."/>
            <person name="Nishikawa T."/>
            <person name="Otsuki T."/>
            <person name="Sugiyama T."/>
            <person name="Irie R."/>
            <person name="Wakamatsu A."/>
            <person name="Hayashi K."/>
            <person name="Sato H."/>
            <person name="Nagai K."/>
            <person name="Kimura K."/>
            <person name="Makita H."/>
            <person name="Sekine M."/>
            <person name="Obayashi M."/>
            <person name="Nishi T."/>
            <person name="Shibahara T."/>
            <person name="Tanaka T."/>
            <person name="Ishii S."/>
            <person name="Yamamoto J."/>
            <person name="Saito K."/>
            <person name="Kawai Y."/>
            <person name="Isono Y."/>
            <person name="Nakamura Y."/>
            <person name="Nagahari K."/>
            <person name="Murakami K."/>
            <person name="Yasuda T."/>
            <person name="Iwayanagi T."/>
            <person name="Wagatsuma M."/>
            <person name="Shiratori A."/>
            <person name="Sudo H."/>
            <person name="Hosoiri T."/>
            <person name="Kaku Y."/>
            <person name="Kodaira H."/>
            <person name="Kondo H."/>
            <person name="Sugawara M."/>
            <person name="Takahashi M."/>
            <person name="Kanda K."/>
            <person name="Yokoi T."/>
            <person name="Furuya T."/>
            <person name="Kikkawa E."/>
            <person name="Omura Y."/>
            <person name="Abe K."/>
            <person name="Kamihara K."/>
            <person name="Katsuta N."/>
            <person name="Sato K."/>
            <person name="Tanikawa M."/>
            <person name="Yamazaki M."/>
            <person name="Ninomiya K."/>
            <person name="Ishibashi T."/>
            <person name="Yamashita H."/>
            <person name="Murakawa K."/>
            <person name="Fujimori K."/>
            <person name="Tanai H."/>
            <person name="Kimata M."/>
            <person name="Watanabe M."/>
            <person name="Hiraoka S."/>
            <person name="Chiba Y."/>
            <person name="Ishida S."/>
            <person name="Ono Y."/>
            <person name="Takiguchi S."/>
            <person name="Watanabe S."/>
            <person name="Yosida M."/>
            <person name="Hotuta T."/>
            <person name="Kusano J."/>
            <person name="Kanehori K."/>
            <person name="Takahashi-Fujii A."/>
            <person name="Hara H."/>
            <person name="Tanase T.-O."/>
            <person name="Nomura Y."/>
            <person name="Togiya S."/>
            <person name="Komai F."/>
            <person name="Hara R."/>
            <person name="Takeuchi K."/>
            <person name="Arita M."/>
            <person name="Imose N."/>
            <person name="Musashino K."/>
            <person name="Yuuki H."/>
            <person name="Oshima A."/>
            <person name="Sasaki N."/>
            <person name="Aotsuka S."/>
            <person name="Yoshikawa Y."/>
            <person name="Matsunawa H."/>
            <person name="Ichihara T."/>
            <person name="Shiohata N."/>
            <person name="Sano S."/>
            <person name="Moriya S."/>
            <person name="Momiyama H."/>
            <person name="Satoh N."/>
            <person name="Takami S."/>
            <person name="Terashima Y."/>
            <person name="Suzuki O."/>
            <person name="Nakagawa S."/>
            <person name="Senoh A."/>
            <person name="Mizoguchi H."/>
            <person name="Goto Y."/>
            <person name="Shimizu F."/>
            <person name="Wakebe H."/>
            <person name="Hishigaki H."/>
            <person name="Watanabe T."/>
            <person name="Sugiyama A."/>
            <person name="Takemoto M."/>
            <person name="Kawakami B."/>
            <person name="Yamazaki M."/>
            <person name="Watanabe K."/>
            <person name="Kumagai A."/>
            <person name="Itakura S."/>
            <person name="Fukuzumi Y."/>
            <person name="Fujimori Y."/>
            <person name="Komiyama M."/>
            <person name="Tashiro H."/>
            <person name="Tanigami A."/>
            <person name="Fujiwara T."/>
            <person name="Ono T."/>
            <person name="Yamada K."/>
            <person name="Fujii Y."/>
            <person name="Ozaki K."/>
            <person name="Hirao M."/>
            <person name="Ohmori Y."/>
            <person name="Kawabata A."/>
            <person name="Hikiji T."/>
            <person name="Kobatake N."/>
            <person name="Inagaki H."/>
            <person name="Ikema Y."/>
            <person name="Okamoto S."/>
            <person name="Okitani R."/>
            <person name="Kawakami T."/>
            <person name="Noguchi S."/>
            <person name="Itoh T."/>
            <person name="Shigeta K."/>
            <person name="Senba T."/>
            <person name="Matsumura K."/>
            <person name="Nakajima Y."/>
            <person name="Mizuno T."/>
            <person name="Morinaga M."/>
            <person name="Sasaki M."/>
            <person name="Togashi T."/>
            <person name="Oyama M."/>
            <person name="Hata H."/>
            <person name="Watanabe M."/>
            <person name="Komatsu T."/>
            <person name="Mizushima-Sugano J."/>
            <person name="Satoh T."/>
            <person name="Shirai Y."/>
            <person name="Takahashi Y."/>
            <person name="Nakagawa K."/>
            <person name="Okumura K."/>
            <person name="Nagase T."/>
            <person name="Nomura N."/>
            <person name="Kikuchi H."/>
            <person name="Masuho Y."/>
            <person name="Yamashita R."/>
            <person name="Nakai K."/>
            <person name="Yada T."/>
            <person name="Nakamura Y."/>
            <person name="Ohara O."/>
            <person name="Isogai T."/>
            <person name="Sugano S."/>
        </authorList>
    </citation>
    <scope>NUCLEOTIDE SEQUENCE [LARGE SCALE MRNA] (ISOFORMS 1 AND 2)</scope>
    <scope>VARIANT LYS-301</scope>
    <source>
        <tissue>Teratocarcinoma</tissue>
    </source>
</reference>
<reference key="5">
    <citation type="journal article" date="2006" name="Nature">
        <title>The DNA sequence, annotation and analysis of human chromosome 3.</title>
        <authorList>
            <person name="Muzny D.M."/>
            <person name="Scherer S.E."/>
            <person name="Kaul R."/>
            <person name="Wang J."/>
            <person name="Yu J."/>
            <person name="Sudbrak R."/>
            <person name="Buhay C.J."/>
            <person name="Chen R."/>
            <person name="Cree A."/>
            <person name="Ding Y."/>
            <person name="Dugan-Rocha S."/>
            <person name="Gill R."/>
            <person name="Gunaratne P."/>
            <person name="Harris R.A."/>
            <person name="Hawes A.C."/>
            <person name="Hernandez J."/>
            <person name="Hodgson A.V."/>
            <person name="Hume J."/>
            <person name="Jackson A."/>
            <person name="Khan Z.M."/>
            <person name="Kovar-Smith C."/>
            <person name="Lewis L.R."/>
            <person name="Lozado R.J."/>
            <person name="Metzker M.L."/>
            <person name="Milosavljevic A."/>
            <person name="Miner G.R."/>
            <person name="Morgan M.B."/>
            <person name="Nazareth L.V."/>
            <person name="Scott G."/>
            <person name="Sodergren E."/>
            <person name="Song X.-Z."/>
            <person name="Steffen D."/>
            <person name="Wei S."/>
            <person name="Wheeler D.A."/>
            <person name="Wright M.W."/>
            <person name="Worley K.C."/>
            <person name="Yuan Y."/>
            <person name="Zhang Z."/>
            <person name="Adams C.Q."/>
            <person name="Ansari-Lari M.A."/>
            <person name="Ayele M."/>
            <person name="Brown M.J."/>
            <person name="Chen G."/>
            <person name="Chen Z."/>
            <person name="Clendenning J."/>
            <person name="Clerc-Blankenburg K.P."/>
            <person name="Chen R."/>
            <person name="Chen Z."/>
            <person name="Davis C."/>
            <person name="Delgado O."/>
            <person name="Dinh H.H."/>
            <person name="Dong W."/>
            <person name="Draper H."/>
            <person name="Ernst S."/>
            <person name="Fu G."/>
            <person name="Gonzalez-Garay M.L."/>
            <person name="Garcia D.K."/>
            <person name="Gillett W."/>
            <person name="Gu J."/>
            <person name="Hao B."/>
            <person name="Haugen E."/>
            <person name="Havlak P."/>
            <person name="He X."/>
            <person name="Hennig S."/>
            <person name="Hu S."/>
            <person name="Huang W."/>
            <person name="Jackson L.R."/>
            <person name="Jacob L.S."/>
            <person name="Kelly S.H."/>
            <person name="Kube M."/>
            <person name="Levy R."/>
            <person name="Li Z."/>
            <person name="Liu B."/>
            <person name="Liu J."/>
            <person name="Liu W."/>
            <person name="Lu J."/>
            <person name="Maheshwari M."/>
            <person name="Nguyen B.-V."/>
            <person name="Okwuonu G.O."/>
            <person name="Palmeiri A."/>
            <person name="Pasternak S."/>
            <person name="Perez L.M."/>
            <person name="Phelps K.A."/>
            <person name="Plopper F.J."/>
            <person name="Qiang B."/>
            <person name="Raymond C."/>
            <person name="Rodriguez R."/>
            <person name="Saenphimmachak C."/>
            <person name="Santibanez J."/>
            <person name="Shen H."/>
            <person name="Shen Y."/>
            <person name="Subramanian S."/>
            <person name="Tabor P.E."/>
            <person name="Verduzco D."/>
            <person name="Waldron L."/>
            <person name="Wang J."/>
            <person name="Wang J."/>
            <person name="Wang Q."/>
            <person name="Williams G.A."/>
            <person name="Wong G.K.-S."/>
            <person name="Yao Z."/>
            <person name="Zhang J."/>
            <person name="Zhang X."/>
            <person name="Zhao G."/>
            <person name="Zhou J."/>
            <person name="Zhou Y."/>
            <person name="Nelson D."/>
            <person name="Lehrach H."/>
            <person name="Reinhardt R."/>
            <person name="Naylor S.L."/>
            <person name="Yang H."/>
            <person name="Olson M."/>
            <person name="Weinstock G."/>
            <person name="Gibbs R.A."/>
        </authorList>
    </citation>
    <scope>NUCLEOTIDE SEQUENCE [LARGE SCALE GENOMIC DNA]</scope>
</reference>
<reference key="6">
    <citation type="journal article" date="2004" name="Genome Res.">
        <title>The status, quality, and expansion of the NIH full-length cDNA project: the Mammalian Gene Collection (MGC).</title>
        <authorList>
            <consortium name="The MGC Project Team"/>
        </authorList>
    </citation>
    <scope>NUCLEOTIDE SEQUENCE [LARGE SCALE MRNA] (ISOFORM 1)</scope>
    <source>
        <tissue>Brain</tissue>
    </source>
</reference>
<reference key="7">
    <citation type="journal article" date="2007" name="BMC Genomics">
        <title>The full-ORF clone resource of the German cDNA consortium.</title>
        <authorList>
            <person name="Bechtel S."/>
            <person name="Rosenfelder H."/>
            <person name="Duda A."/>
            <person name="Schmidt C.P."/>
            <person name="Ernst U."/>
            <person name="Wellenreuther R."/>
            <person name="Mehrle A."/>
            <person name="Schuster C."/>
            <person name="Bahr A."/>
            <person name="Bloecker H."/>
            <person name="Heubner D."/>
            <person name="Hoerlein A."/>
            <person name="Michel G."/>
            <person name="Wedler H."/>
            <person name="Koehrer K."/>
            <person name="Ottenwaelder B."/>
            <person name="Poustka A."/>
            <person name="Wiemann S."/>
            <person name="Schupp I."/>
        </authorList>
    </citation>
    <scope>NUCLEOTIDE SEQUENCE [LARGE SCALE MRNA] OF 3-589 (ISOFORM 1)</scope>
    <scope>VARIANT LYS-301</scope>
    <source>
        <tissue>Melanoma</tissue>
    </source>
</reference>
<reference key="8">
    <citation type="journal article" date="2002" name="Mol. Cell. Biol.">
        <title>Enzymes of the SUMO modification pathway localize to filaments of the nuclear pore complex.</title>
        <authorList>
            <person name="Zhang H."/>
            <person name="Saitoh H."/>
            <person name="Matunis M.J."/>
        </authorList>
    </citation>
    <scope>FUNCTION</scope>
    <scope>SUBCELLULAR LOCATION</scope>
    <scope>INTERACTION WITH NUP153</scope>
    <scope>TOPOLOGY</scope>
    <source>
        <tissue>Fetal brain</tissue>
    </source>
</reference>
<reference key="9">
    <citation type="journal article" date="2002" name="J. Biol. Chem.">
        <title>Association of the human SUMO-1 protease SENP2 with the nuclear pore.</title>
        <authorList>
            <person name="Hang J."/>
            <person name="Dasso M."/>
        </authorList>
    </citation>
    <scope>FUNCTION</scope>
    <scope>SUBCELLULAR LOCATION</scope>
    <scope>INTERACTION WITH NUP153</scope>
</reference>
<reference key="10">
    <citation type="journal article" date="2006" name="Mol. Cell. Biol.">
        <title>Nucleocytoplasmic shuttling modulates activity and ubiquitination-dependent turnover of SUMO-specific protease 2.</title>
        <authorList>
            <person name="Itahana Y."/>
            <person name="Yeh E.T.H."/>
            <person name="Zhang Y."/>
        </authorList>
    </citation>
    <scope>NUCLEAR LOCALIZATION SIGNAL</scope>
    <scope>NUCLEAR EXPORT SIGNAL</scope>
    <scope>SUBCELLULAR LOCATION</scope>
    <scope>UBIQUITINATION</scope>
</reference>
<reference key="11">
    <citation type="journal article" date="2009" name="Anal. Chem.">
        <title>Lys-N and trypsin cover complementary parts of the phosphoproteome in a refined SCX-based approach.</title>
        <authorList>
            <person name="Gauci S."/>
            <person name="Helbig A.O."/>
            <person name="Slijper M."/>
            <person name="Krijgsveld J."/>
            <person name="Heck A.J."/>
            <person name="Mohammed S."/>
        </authorList>
    </citation>
    <scope>IDENTIFICATION BY MASS SPECTROMETRY [LARGE SCALE ANALYSIS]</scope>
</reference>
<reference key="12">
    <citation type="journal article" date="2010" name="Mol. Cell. Biol.">
        <title>Control of adipogenesis by the SUMO-specific protease SENP2.</title>
        <authorList>
            <person name="Chung S.S."/>
            <person name="Ahn B.Y."/>
            <person name="Kim M."/>
            <person name="Choi H.H."/>
            <person name="Park H.S."/>
            <person name="Kang S."/>
            <person name="Park S.G."/>
            <person name="Kim Y.B."/>
            <person name="Cho Y.M."/>
            <person name="Lee H.K."/>
            <person name="Chung C.H."/>
            <person name="Park K.S."/>
        </authorList>
    </citation>
    <scope>FUNCTION</scope>
    <scope>MUTAGENESIS OF CYS-548 AND 576-ARG-LYS-577</scope>
</reference>
<reference key="13">
    <citation type="journal article" date="2011" name="J. Biol. Chem.">
        <title>SUMOylation and SUMO-interacting motif (SIM) of metastasis tumor antigen 1 (MTA1) synergistically regulate its transcriptional repressor function.</title>
        <authorList>
            <person name="Cong L."/>
            <person name="Pakala S.B."/>
            <person name="Ohshiro K."/>
            <person name="Li D.Q."/>
            <person name="Kumar R."/>
        </authorList>
    </citation>
    <scope>FUNCTION</scope>
    <scope>INTERACTION WITH MTA1</scope>
</reference>
<reference key="14">
    <citation type="journal article" date="2013" name="J. Proteome Res.">
        <title>Toward a comprehensive characterization of a human cancer cell phosphoproteome.</title>
        <authorList>
            <person name="Zhou H."/>
            <person name="Di Palma S."/>
            <person name="Preisinger C."/>
            <person name="Peng M."/>
            <person name="Polat A.N."/>
            <person name="Heck A.J."/>
            <person name="Mohammed S."/>
        </authorList>
    </citation>
    <scope>PHOSPHORYLATION [LARGE SCALE ANALYSIS] AT SER-32; SER-333 AND SER-344</scope>
    <scope>IDENTIFICATION BY MASS SPECTROMETRY [LARGE SCALE ANALYSIS]</scope>
    <source>
        <tissue>Cervix carcinoma</tissue>
        <tissue>Erythroleukemia</tissue>
    </source>
</reference>
<reference key="15">
    <citation type="journal article" date="2014" name="J. Proteomics">
        <title>An enzyme assisted RP-RPLC approach for in-depth analysis of human liver phosphoproteome.</title>
        <authorList>
            <person name="Bian Y."/>
            <person name="Song C."/>
            <person name="Cheng K."/>
            <person name="Dong M."/>
            <person name="Wang F."/>
            <person name="Huang J."/>
            <person name="Sun D."/>
            <person name="Wang L."/>
            <person name="Ye M."/>
            <person name="Zou H."/>
        </authorList>
    </citation>
    <scope>PHOSPHORYLATION [LARGE SCALE ANALYSIS] AT SER-344</scope>
    <scope>IDENTIFICATION BY MASS SPECTROMETRY [LARGE SCALE ANALYSIS]</scope>
    <source>
        <tissue>Liver</tissue>
    </source>
</reference>
<reference key="16">
    <citation type="journal article" date="2004" name="Structure">
        <title>A basis for SUMO protease specificity provided by analysis of human Senp2 and a Senp2-SUMO complex.</title>
        <authorList>
            <person name="Reverter D."/>
            <person name="Lima C.D."/>
        </authorList>
    </citation>
    <scope>X-RAY CRYSTALLOGRAPHY (2.2 ANGSTROMS) OF 364-589</scope>
    <scope>X-RAY CRYSTALLOGRAPHY (2.8 ANGSTROMS) OF 364-589 IN COMPLEX WITH SUMO1</scope>
    <scope>FUNCTION</scope>
    <scope>ACTIVE SITE</scope>
    <scope>CATALYTIC ACTIVITY</scope>
</reference>
<sequence length="589" mass="67855">MYRWLVRILGTIFRFCDRSVPPARALLKRRRSDSTLFSTVDTDEIPAKRPRLDCFIHQVKNSLYNAASLFGFPFQLTTKPMVTSACNGTRNVAPSGEVFSNSSSCELTGSGSWNNMLKLGNKSPNGISDYPKIRVTVTRDQPRRVLPSFGFTLNSEGCNRRPGGRRHSKGNPESSLMWKPQEQAVTEMISEESGKGLRRPHCTVEEGVQKEEREKYRKLLERLKESGHGNSVCPVTSNYHSSQRSQMDTLKTKGWGEEQNHGVKTTQFVPKQYRLVETRGPLCSLRSEKRCSKGKITDTETMVGIRFENESRRGYQLEPDLSEEVSARLRLGSGSNGLLRRKVSIIETKEKNCSGKERDRRTDDLLELTEDMEKEISNALGHGPQDEILSSAFKLRITRGDIQTLKNYHWLNDEVINFYMNLLVERNKKQGYPALHVFSTFFYPKLKSGGYQAVKRWTKGVNLFEQEIILVPIHRKVHWSLVVIDLRKKCLKYLDSMGQKGHRICEILLQYLQDESKTKRNSDLNLLEWTHHSMKPHEIPQQLNGSDCGMFTCKYADYISRDKPITFTQHQMPLFRKKMVWEILHQQLL</sequence>
<organism>
    <name type="scientific">Homo sapiens</name>
    <name type="common">Human</name>
    <dbReference type="NCBI Taxonomy" id="9606"/>
    <lineage>
        <taxon>Eukaryota</taxon>
        <taxon>Metazoa</taxon>
        <taxon>Chordata</taxon>
        <taxon>Craniata</taxon>
        <taxon>Vertebrata</taxon>
        <taxon>Euteleostomi</taxon>
        <taxon>Mammalia</taxon>
        <taxon>Eutheria</taxon>
        <taxon>Euarchontoglires</taxon>
        <taxon>Primates</taxon>
        <taxon>Haplorrhini</taxon>
        <taxon>Catarrhini</taxon>
        <taxon>Hominidae</taxon>
        <taxon>Homo</taxon>
    </lineage>
</organism>
<accession>Q9HC62</accession>
<accession>B4DQ42</accession>
<accession>Q8IW97</accession>
<accession>Q96SR2</accession>
<accession>Q9P2L5</accession>
<name>SENP2_HUMAN</name>
<feature type="chain" id="PRO_0000101718" description="Sentrin-specific protease 2">
    <location>
        <begin position="1"/>
        <end position="589"/>
    </location>
</feature>
<feature type="region of interest" description="Disordered" evidence="2">
    <location>
        <begin position="155"/>
        <end position="176"/>
    </location>
</feature>
<feature type="region of interest" description="Protease" evidence="7">
    <location>
        <begin position="396"/>
        <end position="560"/>
    </location>
</feature>
<feature type="short sequence motif" description="Nuclear localization signal" evidence="8">
    <location>
        <begin position="28"/>
        <end position="31"/>
    </location>
</feature>
<feature type="short sequence motif" description="Nuclear localization signal" evidence="8">
    <location>
        <begin position="46"/>
        <end position="51"/>
    </location>
</feature>
<feature type="short sequence motif" description="Nuclear export signal" evidence="8">
    <location>
        <begin position="317"/>
        <end position="332"/>
    </location>
</feature>
<feature type="active site" evidence="7">
    <location>
        <position position="478"/>
    </location>
</feature>
<feature type="active site" evidence="7">
    <location>
        <position position="495"/>
    </location>
</feature>
<feature type="active site" description="Nucleophile" evidence="7">
    <location>
        <position position="548"/>
    </location>
</feature>
<feature type="modified residue" description="Phosphoserine" evidence="18">
    <location>
        <position position="32"/>
    </location>
</feature>
<feature type="modified residue" description="Phosphoserine" evidence="18">
    <location>
        <position position="333"/>
    </location>
</feature>
<feature type="modified residue" description="Phosphoserine" evidence="18 19">
    <location>
        <position position="344"/>
    </location>
</feature>
<feature type="splice variant" id="VSP_056697" description="In isoform 2." evidence="14">
    <original>MYRWLVRILGTIFRFCDRSVPPARALLKRRRSD</original>
    <variation>MDSHPCLYCGPQDSEGTNWQTSP</variation>
    <location>
        <begin position="1"/>
        <end position="33"/>
    </location>
</feature>
<feature type="sequence variant" id="VAR_029650" description="In dbSNP:rs6762208." evidence="3 6 9 12">
    <original>T</original>
    <variation>K</variation>
    <location>
        <position position="301"/>
    </location>
</feature>
<feature type="mutagenesis site" description="Does not desumoylate CEBPB." evidence="10">
    <original>C</original>
    <variation>S</variation>
    <location>
        <position position="548"/>
    </location>
</feature>
<feature type="mutagenesis site" description="Does not desumoylate CEBPB." evidence="10">
    <original>RK</original>
    <variation>LM</variation>
    <location>
        <begin position="576"/>
        <end position="577"/>
    </location>
</feature>
<feature type="sequence conflict" description="In Ref. 1; AAG15309." evidence="16" ref="1">
    <original>T</original>
    <variation>TA</variation>
    <location>
        <position position="39"/>
    </location>
</feature>
<feature type="sequence conflict" description="In Ref. 4; BAB55222." evidence="16" ref="4">
    <original>Q</original>
    <variation>H</variation>
    <location>
        <position position="403"/>
    </location>
</feature>
<feature type="helix" evidence="22">
    <location>
        <begin position="370"/>
        <end position="380"/>
    </location>
</feature>
<feature type="strand" evidence="22">
    <location>
        <begin position="381"/>
        <end position="383"/>
    </location>
</feature>
<feature type="strand" evidence="22">
    <location>
        <begin position="388"/>
        <end position="392"/>
    </location>
</feature>
<feature type="strand" evidence="22">
    <location>
        <begin position="396"/>
        <end position="398"/>
    </location>
</feature>
<feature type="helix" evidence="22">
    <location>
        <begin position="399"/>
        <end position="402"/>
    </location>
</feature>
<feature type="helix" evidence="22">
    <location>
        <begin position="403"/>
        <end position="405"/>
    </location>
</feature>
<feature type="helix" evidence="22">
    <location>
        <begin position="413"/>
        <end position="430"/>
    </location>
</feature>
<feature type="strand" evidence="22">
    <location>
        <begin position="435"/>
        <end position="437"/>
    </location>
</feature>
<feature type="helix" evidence="22">
    <location>
        <begin position="442"/>
        <end position="454"/>
    </location>
</feature>
<feature type="helix" evidence="22">
    <location>
        <begin position="455"/>
        <end position="458"/>
    </location>
</feature>
<feature type="helix" evidence="22">
    <location>
        <begin position="463"/>
        <end position="465"/>
    </location>
</feature>
<feature type="strand" evidence="22">
    <location>
        <begin position="466"/>
        <end position="474"/>
    </location>
</feature>
<feature type="strand" evidence="22">
    <location>
        <begin position="479"/>
        <end position="485"/>
    </location>
</feature>
<feature type="turn" evidence="22">
    <location>
        <begin position="486"/>
        <end position="489"/>
    </location>
</feature>
<feature type="strand" evidence="22">
    <location>
        <begin position="490"/>
        <end position="494"/>
    </location>
</feature>
<feature type="strand" evidence="21">
    <location>
        <begin position="496"/>
        <end position="498"/>
    </location>
</feature>
<feature type="helix" evidence="22">
    <location>
        <begin position="502"/>
        <end position="520"/>
    </location>
</feature>
<feature type="helix" evidence="20">
    <location>
        <begin position="526"/>
        <end position="528"/>
    </location>
</feature>
<feature type="strand" evidence="22">
    <location>
        <begin position="530"/>
        <end position="533"/>
    </location>
</feature>
<feature type="turn" evidence="20">
    <location>
        <begin position="536"/>
        <end position="538"/>
    </location>
</feature>
<feature type="turn" evidence="22">
    <location>
        <begin position="543"/>
        <end position="546"/>
    </location>
</feature>
<feature type="helix" evidence="22">
    <location>
        <begin position="548"/>
        <end position="560"/>
    </location>
</feature>
<feature type="helix" evidence="22">
    <location>
        <begin position="569"/>
        <end position="571"/>
    </location>
</feature>
<feature type="helix" evidence="22">
    <location>
        <begin position="572"/>
        <end position="585"/>
    </location>
</feature>
<gene>
    <name evidence="13 17" type="primary">SENP2</name>
    <name evidence="13" type="synonym">KIAA1331</name>
</gene>
<dbReference type="EC" id="3.4.22.-" evidence="10 11"/>
<dbReference type="EMBL" id="AF151697">
    <property type="protein sequence ID" value="AAG15309.2"/>
    <property type="molecule type" value="mRNA"/>
</dbReference>
<dbReference type="EMBL" id="AB037752">
    <property type="protein sequence ID" value="BAA92569.2"/>
    <property type="molecule type" value="mRNA"/>
</dbReference>
<dbReference type="EMBL" id="AK027599">
    <property type="protein sequence ID" value="BAB55222.1"/>
    <property type="molecule type" value="mRNA"/>
</dbReference>
<dbReference type="EMBL" id="AK298628">
    <property type="protein sequence ID" value="BAG60804.1"/>
    <property type="molecule type" value="mRNA"/>
</dbReference>
<dbReference type="EMBL" id="AC016961">
    <property type="status" value="NOT_ANNOTATED_CDS"/>
    <property type="molecule type" value="Genomic_DNA"/>
</dbReference>
<dbReference type="EMBL" id="AC133473">
    <property type="status" value="NOT_ANNOTATED_CDS"/>
    <property type="molecule type" value="Genomic_DNA"/>
</dbReference>
<dbReference type="EMBL" id="BC040609">
    <property type="protein sequence ID" value="AAH40609.1"/>
    <property type="molecule type" value="mRNA"/>
</dbReference>
<dbReference type="EMBL" id="AL834380">
    <property type="protein sequence ID" value="CAD39043.1"/>
    <property type="molecule type" value="mRNA"/>
</dbReference>
<dbReference type="CCDS" id="CCDS33902.1">
    <molecule id="Q9HC62-1"/>
</dbReference>
<dbReference type="RefSeq" id="NP_067640.2">
    <molecule id="Q9HC62-1"/>
    <property type="nucleotide sequence ID" value="NM_021627.3"/>
</dbReference>
<dbReference type="PDB" id="1TGZ">
    <property type="method" value="X-ray"/>
    <property type="resolution" value="2.80 A"/>
    <property type="chains" value="A=364-589"/>
</dbReference>
<dbReference type="PDB" id="1TH0">
    <property type="method" value="X-ray"/>
    <property type="resolution" value="2.20 A"/>
    <property type="chains" value="A/B=364-589"/>
</dbReference>
<dbReference type="PDB" id="2IO0">
    <property type="method" value="X-ray"/>
    <property type="resolution" value="2.30 A"/>
    <property type="chains" value="A=364-589"/>
</dbReference>
<dbReference type="PDB" id="2IO1">
    <property type="method" value="X-ray"/>
    <property type="resolution" value="2.60 A"/>
    <property type="chains" value="A/C/E=364-589"/>
</dbReference>
<dbReference type="PDB" id="2IO2">
    <property type="method" value="X-ray"/>
    <property type="resolution" value="2.90 A"/>
    <property type="chains" value="A=364-589"/>
</dbReference>
<dbReference type="PDB" id="2IO3">
    <property type="method" value="X-ray"/>
    <property type="resolution" value="3.20 A"/>
    <property type="chains" value="A=364-589"/>
</dbReference>
<dbReference type="PDB" id="3ZO5">
    <property type="method" value="X-ray"/>
    <property type="resolution" value="2.15 A"/>
    <property type="chains" value="A=363-589"/>
</dbReference>
<dbReference type="PDB" id="5AEK">
    <property type="method" value="X-ray"/>
    <property type="resolution" value="3.00 A"/>
    <property type="chains" value="A/C/E/G/I/K/M/O/Q/S/U/W=366-589"/>
</dbReference>
<dbReference type="PDBsum" id="1TGZ"/>
<dbReference type="PDBsum" id="1TH0"/>
<dbReference type="PDBsum" id="2IO0"/>
<dbReference type="PDBsum" id="2IO1"/>
<dbReference type="PDBsum" id="2IO2"/>
<dbReference type="PDBsum" id="2IO3"/>
<dbReference type="PDBsum" id="3ZO5"/>
<dbReference type="PDBsum" id="5AEK"/>
<dbReference type="SMR" id="Q9HC62"/>
<dbReference type="BioGRID" id="121885">
    <property type="interactions" value="180"/>
</dbReference>
<dbReference type="DIP" id="DIP-29254N"/>
<dbReference type="FunCoup" id="Q9HC62">
    <property type="interactions" value="3493"/>
</dbReference>
<dbReference type="IntAct" id="Q9HC62">
    <property type="interactions" value="44"/>
</dbReference>
<dbReference type="MINT" id="Q9HC62"/>
<dbReference type="STRING" id="9606.ENSP00000296257"/>
<dbReference type="BindingDB" id="Q9HC62"/>
<dbReference type="ChEMBL" id="CHEMBL2176776"/>
<dbReference type="MEROPS" id="C48.007"/>
<dbReference type="TCDB" id="1.I.1.1.3">
    <property type="family name" value="the nuclear pore complex (npc) family"/>
</dbReference>
<dbReference type="iPTMnet" id="Q9HC62"/>
<dbReference type="PhosphoSitePlus" id="Q9HC62"/>
<dbReference type="BioMuta" id="SENP2"/>
<dbReference type="DMDM" id="143811458"/>
<dbReference type="jPOST" id="Q9HC62"/>
<dbReference type="MassIVE" id="Q9HC62"/>
<dbReference type="PaxDb" id="9606-ENSP00000296257"/>
<dbReference type="PeptideAtlas" id="Q9HC62"/>
<dbReference type="ProteomicsDB" id="4840"/>
<dbReference type="ProteomicsDB" id="81643">
    <molecule id="Q9HC62-1"/>
</dbReference>
<dbReference type="Pumba" id="Q9HC62"/>
<dbReference type="Antibodypedia" id="33840">
    <property type="antibodies" value="778 antibodies from 35 providers"/>
</dbReference>
<dbReference type="DNASU" id="59343"/>
<dbReference type="Ensembl" id="ENST00000296257.10">
    <molecule id="Q9HC62-1"/>
    <property type="protein sequence ID" value="ENSP00000296257.5"/>
    <property type="gene ID" value="ENSG00000163904.13"/>
</dbReference>
<dbReference type="GeneID" id="59343"/>
<dbReference type="KEGG" id="hsa:59343"/>
<dbReference type="MANE-Select" id="ENST00000296257.10">
    <property type="protein sequence ID" value="ENSP00000296257.5"/>
    <property type="RefSeq nucleotide sequence ID" value="NM_021627.3"/>
    <property type="RefSeq protein sequence ID" value="NP_067640.2"/>
</dbReference>
<dbReference type="UCSC" id="uc003fpn.4">
    <molecule id="Q9HC62-1"/>
    <property type="organism name" value="human"/>
</dbReference>
<dbReference type="AGR" id="HGNC:23116"/>
<dbReference type="CTD" id="59343"/>
<dbReference type="DisGeNET" id="59343"/>
<dbReference type="GeneCards" id="SENP2"/>
<dbReference type="HGNC" id="HGNC:23116">
    <property type="gene designation" value="SENP2"/>
</dbReference>
<dbReference type="HPA" id="ENSG00000163904">
    <property type="expression patterns" value="Low tissue specificity"/>
</dbReference>
<dbReference type="MIM" id="608261">
    <property type="type" value="gene"/>
</dbReference>
<dbReference type="neXtProt" id="NX_Q9HC62"/>
<dbReference type="OpenTargets" id="ENSG00000163904"/>
<dbReference type="PharmGKB" id="PA134955185"/>
<dbReference type="VEuPathDB" id="HostDB:ENSG00000163904"/>
<dbReference type="eggNOG" id="KOG0778">
    <property type="taxonomic scope" value="Eukaryota"/>
</dbReference>
<dbReference type="GeneTree" id="ENSGT00940000154951"/>
<dbReference type="HOGENOM" id="CLU_024324_4_0_1"/>
<dbReference type="InParanoid" id="Q9HC62"/>
<dbReference type="OMA" id="CHWLNDE"/>
<dbReference type="OrthoDB" id="1939479at2759"/>
<dbReference type="PAN-GO" id="Q9HC62">
    <property type="GO annotations" value="3 GO annotations based on evolutionary models"/>
</dbReference>
<dbReference type="PhylomeDB" id="Q9HC62"/>
<dbReference type="TreeFam" id="TF316289"/>
<dbReference type="BRENDA" id="3.4.22.B71">
    <property type="organism ID" value="2681"/>
</dbReference>
<dbReference type="PathwayCommons" id="Q9HC62"/>
<dbReference type="Reactome" id="R-HSA-3065679">
    <property type="pathway name" value="SUMO is proteolytically processed"/>
</dbReference>
<dbReference type="SignaLink" id="Q9HC62"/>
<dbReference type="SIGNOR" id="Q9HC62"/>
<dbReference type="BioGRID-ORCS" id="59343">
    <property type="hits" value="20 hits in 1160 CRISPR screens"/>
</dbReference>
<dbReference type="CD-CODE" id="D6A53B8E">
    <property type="entry name" value="Nuclear pore complex"/>
</dbReference>
<dbReference type="ChiTaRS" id="SENP2">
    <property type="organism name" value="human"/>
</dbReference>
<dbReference type="EvolutionaryTrace" id="Q9HC62"/>
<dbReference type="GeneWiki" id="SENP2"/>
<dbReference type="GenomeRNAi" id="59343"/>
<dbReference type="Pharos" id="Q9HC62">
    <property type="development level" value="Tchem"/>
</dbReference>
<dbReference type="PRO" id="PR:Q9HC62"/>
<dbReference type="Proteomes" id="UP000005640">
    <property type="component" value="Chromosome 3"/>
</dbReference>
<dbReference type="RNAct" id="Q9HC62">
    <property type="molecule type" value="protein"/>
</dbReference>
<dbReference type="Bgee" id="ENSG00000163904">
    <property type="expression patterns" value="Expressed in calcaneal tendon and 185 other cell types or tissues"/>
</dbReference>
<dbReference type="ExpressionAtlas" id="Q9HC62">
    <property type="expression patterns" value="baseline and differential"/>
</dbReference>
<dbReference type="GO" id="GO:0005829">
    <property type="term" value="C:cytosol"/>
    <property type="evidence" value="ECO:0000314"/>
    <property type="project" value="HPA"/>
</dbReference>
<dbReference type="GO" id="GO:0031965">
    <property type="term" value="C:nuclear membrane"/>
    <property type="evidence" value="ECO:0007669"/>
    <property type="project" value="UniProtKB-SubCell"/>
</dbReference>
<dbReference type="GO" id="GO:0005643">
    <property type="term" value="C:nuclear pore"/>
    <property type="evidence" value="ECO:0000314"/>
    <property type="project" value="UniProtKB"/>
</dbReference>
<dbReference type="GO" id="GO:0005654">
    <property type="term" value="C:nucleoplasm"/>
    <property type="evidence" value="ECO:0000304"/>
    <property type="project" value="Reactome"/>
</dbReference>
<dbReference type="GO" id="GO:0005634">
    <property type="term" value="C:nucleus"/>
    <property type="evidence" value="ECO:0000318"/>
    <property type="project" value="GO_Central"/>
</dbReference>
<dbReference type="GO" id="GO:0016605">
    <property type="term" value="C:PML body"/>
    <property type="evidence" value="ECO:0007669"/>
    <property type="project" value="Ensembl"/>
</dbReference>
<dbReference type="GO" id="GO:0016929">
    <property type="term" value="F:deSUMOylase activity"/>
    <property type="evidence" value="ECO:0000318"/>
    <property type="project" value="GO_Central"/>
</dbReference>
<dbReference type="GO" id="GO:0070139">
    <property type="term" value="F:SUMO-specific endopeptidase activity"/>
    <property type="evidence" value="ECO:0000314"/>
    <property type="project" value="UniProtKB"/>
</dbReference>
<dbReference type="GO" id="GO:0045444">
    <property type="term" value="P:fat cell differentiation"/>
    <property type="evidence" value="ECO:0000250"/>
    <property type="project" value="UniProtKB"/>
</dbReference>
<dbReference type="GO" id="GO:0007507">
    <property type="term" value="P:heart development"/>
    <property type="evidence" value="ECO:0007669"/>
    <property type="project" value="Ensembl"/>
</dbReference>
<dbReference type="GO" id="GO:0060711">
    <property type="term" value="P:labyrinthine layer development"/>
    <property type="evidence" value="ECO:0007669"/>
    <property type="project" value="Ensembl"/>
</dbReference>
<dbReference type="GO" id="GO:0051028">
    <property type="term" value="P:mRNA transport"/>
    <property type="evidence" value="ECO:0007669"/>
    <property type="project" value="UniProtKB-KW"/>
</dbReference>
<dbReference type="GO" id="GO:0031397">
    <property type="term" value="P:negative regulation of protein ubiquitination"/>
    <property type="evidence" value="ECO:0000314"/>
    <property type="project" value="CACAO"/>
</dbReference>
<dbReference type="GO" id="GO:0031398">
    <property type="term" value="P:positive regulation of protein ubiquitination"/>
    <property type="evidence" value="ECO:0000315"/>
    <property type="project" value="CACAO"/>
</dbReference>
<dbReference type="GO" id="GO:0045944">
    <property type="term" value="P:positive regulation of transcription by RNA polymerase II"/>
    <property type="evidence" value="ECO:0007669"/>
    <property type="project" value="Ensembl"/>
</dbReference>
<dbReference type="GO" id="GO:0031648">
    <property type="term" value="P:protein destabilization"/>
    <property type="evidence" value="ECO:0000315"/>
    <property type="project" value="CACAO"/>
</dbReference>
<dbReference type="GO" id="GO:0016926">
    <property type="term" value="P:protein desumoylation"/>
    <property type="evidence" value="ECO:0000314"/>
    <property type="project" value="UniProtKB"/>
</dbReference>
<dbReference type="GO" id="GO:0016925">
    <property type="term" value="P:protein sumoylation"/>
    <property type="evidence" value="ECO:0000304"/>
    <property type="project" value="Reactome"/>
</dbReference>
<dbReference type="GO" id="GO:0015031">
    <property type="term" value="P:protein transport"/>
    <property type="evidence" value="ECO:0007669"/>
    <property type="project" value="UniProtKB-KW"/>
</dbReference>
<dbReference type="GO" id="GO:0006508">
    <property type="term" value="P:proteolysis"/>
    <property type="evidence" value="ECO:0007669"/>
    <property type="project" value="UniProtKB-KW"/>
</dbReference>
<dbReference type="GO" id="GO:0032875">
    <property type="term" value="P:regulation of DNA endoreduplication"/>
    <property type="evidence" value="ECO:0007669"/>
    <property type="project" value="Ensembl"/>
</dbReference>
<dbReference type="GO" id="GO:2000045">
    <property type="term" value="P:regulation of G1/S transition of mitotic cell cycle"/>
    <property type="evidence" value="ECO:0007669"/>
    <property type="project" value="Ensembl"/>
</dbReference>
<dbReference type="GO" id="GO:0030111">
    <property type="term" value="P:regulation of Wnt signaling pathway"/>
    <property type="evidence" value="ECO:0000303"/>
    <property type="project" value="UniProtKB"/>
</dbReference>
<dbReference type="GO" id="GO:0060707">
    <property type="term" value="P:trophoblast giant cell differentiation"/>
    <property type="evidence" value="ECO:0007669"/>
    <property type="project" value="Ensembl"/>
</dbReference>
<dbReference type="GO" id="GO:0016055">
    <property type="term" value="P:Wnt signaling pathway"/>
    <property type="evidence" value="ECO:0007669"/>
    <property type="project" value="UniProtKB-KW"/>
</dbReference>
<dbReference type="FunFam" id="3.40.395.10:FF:000001">
    <property type="entry name" value="Sentrin-specific protease 1"/>
    <property type="match status" value="1"/>
</dbReference>
<dbReference type="Gene3D" id="3.40.395.10">
    <property type="entry name" value="Adenoviral Proteinase, Chain A"/>
    <property type="match status" value="1"/>
</dbReference>
<dbReference type="InterPro" id="IPR038765">
    <property type="entry name" value="Papain-like_cys_pep_sf"/>
</dbReference>
<dbReference type="InterPro" id="IPR003653">
    <property type="entry name" value="Peptidase_C48_C"/>
</dbReference>
<dbReference type="PANTHER" id="PTHR12606:SF11">
    <property type="entry name" value="SENTRIN-SPECIFIC PROTEASE 2"/>
    <property type="match status" value="1"/>
</dbReference>
<dbReference type="PANTHER" id="PTHR12606">
    <property type="entry name" value="SENTRIN/SUMO-SPECIFIC PROTEASE"/>
    <property type="match status" value="1"/>
</dbReference>
<dbReference type="Pfam" id="PF02902">
    <property type="entry name" value="Peptidase_C48"/>
    <property type="match status" value="1"/>
</dbReference>
<dbReference type="SUPFAM" id="SSF54001">
    <property type="entry name" value="Cysteine proteinases"/>
    <property type="match status" value="1"/>
</dbReference>
<dbReference type="PROSITE" id="PS50600">
    <property type="entry name" value="ULP_PROTEASE"/>
    <property type="match status" value="1"/>
</dbReference>
<proteinExistence type="evidence at protein level"/>
<comment type="function">
    <text evidence="1 4 5 7 10 11">Protease that catalyzes two essential functions in the SUMO pathway (PubMed:11896061, PubMed:12192048, PubMed:15296745, PubMed:20194620, PubMed:21965678). The first is the hydrolysis of an alpha-linked peptide bond at the C-terminal end of the small ubiquitin-like modifier (SUMO) propeptides, SUMO1, SUMO2 and SUMO3 leading to the mature form of the proteins (PubMed:15296745). The second is the deconjugation of SUMO1, SUMO2 and SUMO3 from targeted proteins, by cleaving an epsilon-linked peptide bond between the C-terminal glycine of the mature SUMO and the lysine epsilon-amino group of the target protein (PubMed:15296745, PubMed:20194620, PubMed:21965678). May down-regulate CTNNB1 levels and thereby modulate the Wnt pathway (By similarity). Deconjugates SUMO2 from MTA1 (PubMed:21965678). Plays a dynamic role in adipogenesis by desumoylating and promoting the stabilization of CEBPB (PubMed:20194620). Acts as a regulator of the cGAS-STING pathway by catalyzing desumoylation of CGAS and STING1 during the late phase of viral infection (By similarity).</text>
</comment>
<comment type="subunit">
    <text evidence="4 5 7 11">Binds to SUMO2 and SUMO3 (PubMed:15296745). Interacts with the C-terminal domain of NUP153 via its N-terminus (PubMed:11896061, PubMed:12192048). Interacts with MTA1 (PubMed:21965678).</text>
</comment>
<comment type="interaction">
    <interactant intactId="EBI-714881">
        <id>Q9HC62</id>
    </interactant>
    <interactant intactId="EBI-2876502">
        <id>Q96CM8</id>
        <label>ACSF2</label>
    </interactant>
    <organismsDiffer>false</organismsDiffer>
    <experiments>3</experiments>
</comment>
<comment type="interaction">
    <interactant intactId="EBI-714881">
        <id>Q9HC62</id>
    </interactant>
    <interactant intactId="EBI-741181">
        <id>Q6RW13</id>
        <label>AGTRAP</label>
    </interactant>
    <organismsDiffer>false</organismsDiffer>
    <experiments>3</experiments>
</comment>
<comment type="interaction">
    <interactant intactId="EBI-714881">
        <id>Q9HC62</id>
    </interactant>
    <interactant intactId="EBI-11522760">
        <id>Q6RW13-2</id>
        <label>AGTRAP</label>
    </interactant>
    <organismsDiffer>false</organismsDiffer>
    <experiments>3</experiments>
</comment>
<comment type="interaction">
    <interactant intactId="EBI-714881">
        <id>Q9HC62</id>
    </interactant>
    <interactant intactId="EBI-18302142">
        <id>P55056</id>
        <label>APOC4</label>
    </interactant>
    <organismsDiffer>false</organismsDiffer>
    <experiments>3</experiments>
</comment>
<comment type="interaction">
    <interactant intactId="EBI-714881">
        <id>Q9HC62</id>
    </interactant>
    <interactant intactId="EBI-714543">
        <id>Q15041</id>
        <label>ARL6IP1</label>
    </interactant>
    <organismsDiffer>false</organismsDiffer>
    <experiments>3</experiments>
</comment>
<comment type="interaction">
    <interactant intactId="EBI-714881">
        <id>Q9HC62</id>
    </interactant>
    <interactant intactId="EBI-36513937">
        <id>Q5T9G4-2</id>
        <label>ARMC12</label>
    </interactant>
    <organismsDiffer>false</organismsDiffer>
    <experiments>3</experiments>
</comment>
<comment type="interaction">
    <interactant intactId="EBI-714881">
        <id>Q9HC62</id>
    </interactant>
    <interactant intactId="EBI-3059266">
        <id>Q8IVP5</id>
        <label>FUNDC1</label>
    </interactant>
    <organismsDiffer>false</organismsDiffer>
    <experiments>3</experiments>
</comment>
<comment type="interaction">
    <interactant intactId="EBI-714881">
        <id>Q9HC62</id>
    </interactant>
    <interactant intactId="EBI-10763431">
        <id>P53701</id>
        <label>HCCS</label>
    </interactant>
    <organismsDiffer>false</organismsDiffer>
    <experiments>3</experiments>
</comment>
<comment type="interaction">
    <interactant intactId="EBI-714881">
        <id>Q9HC62</id>
    </interactant>
    <interactant intactId="EBI-81279">
        <id>Q9Y6K9</id>
        <label>IKBKG</label>
    </interactant>
    <organismsDiffer>false</organismsDiffer>
    <experiments>3</experiments>
</comment>
<comment type="interaction">
    <interactant intactId="EBI-714881">
        <id>Q9HC62</id>
    </interactant>
    <interactant intactId="EBI-749265">
        <id>Q8N6L0</id>
        <label>KASH5</label>
    </interactant>
    <organismsDiffer>false</organismsDiffer>
    <experiments>6</experiments>
</comment>
<comment type="interaction">
    <interactant intactId="EBI-714881">
        <id>Q9HC62</id>
    </interactant>
    <interactant intactId="EBI-10192441">
        <id>Q86VR2</id>
        <label>RETREG3</label>
    </interactant>
    <organismsDiffer>false</organismsDiffer>
    <experiments>3</experiments>
</comment>
<comment type="interaction">
    <interactant intactId="EBI-714881">
        <id>Q9HC62</id>
    </interactant>
    <interactant intactId="EBI-1052363">
        <id>Q9NS64</id>
        <label>RPRM</label>
    </interactant>
    <organismsDiffer>false</organismsDiffer>
    <experiments>3</experiments>
</comment>
<comment type="interaction">
    <interactant intactId="EBI-714881">
        <id>Q9HC62</id>
    </interactant>
    <interactant intactId="EBI-3923480">
        <id>Q8N3Y7</id>
        <label>SDR16C5</label>
    </interactant>
    <organismsDiffer>false</organismsDiffer>
    <experiments>3</experiments>
</comment>
<comment type="interaction">
    <interactant intactId="EBI-714881">
        <id>Q9HC62</id>
    </interactant>
    <interactant intactId="EBI-80140">
        <id>P63165</id>
        <label>SUMO1</label>
    </interactant>
    <organismsDiffer>false</organismsDiffer>
    <experiments>2</experiments>
</comment>
<comment type="interaction">
    <interactant intactId="EBI-714881">
        <id>Q9HC62</id>
    </interactant>
    <interactant intactId="EBI-473220">
        <id>P61956</id>
        <label>SUMO2</label>
    </interactant>
    <organismsDiffer>false</organismsDiffer>
    <experiments>5</experiments>
</comment>
<comment type="interaction">
    <interactant intactId="EBI-714881">
        <id>Q9HC62</id>
    </interactant>
    <interactant intactId="EBI-474067">
        <id>P55854</id>
        <label>SUMO3</label>
    </interactant>
    <organismsDiffer>false</organismsDiffer>
    <experiments>7</experiments>
</comment>
<comment type="interaction">
    <interactant intactId="EBI-714881">
        <id>Q9HC62</id>
    </interactant>
    <interactant intactId="EBI-7131783">
        <id>Q8N205</id>
        <label>SYNE4</label>
    </interactant>
    <organismsDiffer>false</organismsDiffer>
    <experiments>3</experiments>
</comment>
<comment type="interaction">
    <interactant intactId="EBI-714881">
        <id>Q9HC62</id>
    </interactant>
    <interactant intactId="EBI-9675724">
        <id>Q8WW34</id>
        <label>TMEM239</label>
    </interactant>
    <organismsDiffer>false</organismsDiffer>
    <experiments>3</experiments>
</comment>
<comment type="interaction">
    <interactant intactId="EBI-714881">
        <id>Q9HC62</id>
    </interactant>
    <interactant intactId="EBI-11528917">
        <id>Q8WW34-2</id>
        <label>TMEM239</label>
    </interactant>
    <organismsDiffer>false</organismsDiffer>
    <experiments>3</experiments>
</comment>
<comment type="interaction">
    <interactant intactId="EBI-714881">
        <id>Q9HC62</id>
    </interactant>
    <interactant intactId="EBI-1044859">
        <id>Q9UBN6</id>
        <label>TNFRSF10D</label>
    </interactant>
    <organismsDiffer>false</organismsDiffer>
    <experiments>3</experiments>
</comment>
<comment type="subcellular location">
    <subcellularLocation>
        <location evidence="5">Nucleus</location>
        <location evidence="5">Nuclear pore complex</location>
    </subcellularLocation>
    <subcellularLocation>
        <location evidence="5">Nucleus membrane</location>
        <topology evidence="5">Peripheral membrane protein</topology>
        <orientation evidence="5">Nucleoplasmic side</orientation>
    </subcellularLocation>
    <subcellularLocation>
        <location evidence="8">Cytoplasm</location>
    </subcellularLocation>
    <text evidence="8">Shuttles between cytoplasm and nucleus.</text>
</comment>
<comment type="alternative products">
    <event type="alternative splicing"/>
    <isoform>
        <id>Q9HC62-1</id>
        <name>1</name>
        <sequence type="displayed"/>
    </isoform>
    <isoform>
        <id>Q9HC62-2</id>
        <name>2</name>
        <sequence type="described" ref="VSP_056697"/>
    </isoform>
</comment>
<comment type="domain">
    <text evidence="5">The N-terminus is necessary and sufficient for nuclear envelope targeting.</text>
</comment>
<comment type="PTM">
    <text evidence="8">Polyubiquitinated; which leads to proteasomal degradation.</text>
</comment>
<comment type="similarity">
    <text evidence="16">Belongs to the peptidase C48 family.</text>
</comment>